<name>FMT_RHOPS</name>
<sequence length="310" mass="33068">MPLRLVFMGTPDFAVPTLLALSAYGHDIAAVYSREPKPAGRGMKLQHSPVAQEAQRFGIPVLTPKTLKTDEALAEFRSHDADAAVVVAYGMILPQAILDAPRLGCYNLHGSLLPRWRGAAPLNRAIMAGDAESGVMVMKMDAGLDTGDVAMAERIAITDAMTVTDLHDSLARLGADLMVRAMAALERDQLQLTRQSEHGVTYAAKIDKAEAKIDFARPAQAVLRHIHGLSPFPGAWCELPIDGEAVRVKILRCASATGGGAPGQVLDDRLTIACQDGAIRVLQLQRAGKQPMQADEFLRGTPIAAGAVIV</sequence>
<comment type="function">
    <text evidence="1">Attaches a formyl group to the free amino group of methionyl-tRNA(fMet). The formyl group appears to play a dual role in the initiator identity of N-formylmethionyl-tRNA by promoting its recognition by IF2 and preventing the misappropriation of this tRNA by the elongation apparatus.</text>
</comment>
<comment type="catalytic activity">
    <reaction evidence="1">
        <text>L-methionyl-tRNA(fMet) + (6R)-10-formyltetrahydrofolate = N-formyl-L-methionyl-tRNA(fMet) + (6S)-5,6,7,8-tetrahydrofolate + H(+)</text>
        <dbReference type="Rhea" id="RHEA:24380"/>
        <dbReference type="Rhea" id="RHEA-COMP:9952"/>
        <dbReference type="Rhea" id="RHEA-COMP:9953"/>
        <dbReference type="ChEBI" id="CHEBI:15378"/>
        <dbReference type="ChEBI" id="CHEBI:57453"/>
        <dbReference type="ChEBI" id="CHEBI:78530"/>
        <dbReference type="ChEBI" id="CHEBI:78844"/>
        <dbReference type="ChEBI" id="CHEBI:195366"/>
        <dbReference type="EC" id="2.1.2.9"/>
    </reaction>
</comment>
<comment type="similarity">
    <text evidence="1">Belongs to the Fmt family.</text>
</comment>
<evidence type="ECO:0000255" key="1">
    <source>
        <dbReference type="HAMAP-Rule" id="MF_00182"/>
    </source>
</evidence>
<dbReference type="EC" id="2.1.2.9" evidence="1"/>
<dbReference type="EMBL" id="CP000283">
    <property type="protein sequence ID" value="ABE37320.1"/>
    <property type="molecule type" value="Genomic_DNA"/>
</dbReference>
<dbReference type="SMR" id="Q13F19"/>
<dbReference type="STRING" id="316057.RPD_0080"/>
<dbReference type="KEGG" id="rpd:RPD_0080"/>
<dbReference type="eggNOG" id="COG0223">
    <property type="taxonomic scope" value="Bacteria"/>
</dbReference>
<dbReference type="HOGENOM" id="CLU_033347_1_2_5"/>
<dbReference type="BioCyc" id="RPAL316057:RPD_RS00400-MONOMER"/>
<dbReference type="Proteomes" id="UP000001818">
    <property type="component" value="Chromosome"/>
</dbReference>
<dbReference type="GO" id="GO:0005829">
    <property type="term" value="C:cytosol"/>
    <property type="evidence" value="ECO:0007669"/>
    <property type="project" value="TreeGrafter"/>
</dbReference>
<dbReference type="GO" id="GO:0004479">
    <property type="term" value="F:methionyl-tRNA formyltransferase activity"/>
    <property type="evidence" value="ECO:0007669"/>
    <property type="project" value="UniProtKB-UniRule"/>
</dbReference>
<dbReference type="CDD" id="cd08646">
    <property type="entry name" value="FMT_core_Met-tRNA-FMT_N"/>
    <property type="match status" value="1"/>
</dbReference>
<dbReference type="CDD" id="cd08704">
    <property type="entry name" value="Met_tRNA_FMT_C"/>
    <property type="match status" value="1"/>
</dbReference>
<dbReference type="FunFam" id="3.40.50.12230:FF:000001">
    <property type="entry name" value="Methionyl-tRNA formyltransferase"/>
    <property type="match status" value="1"/>
</dbReference>
<dbReference type="Gene3D" id="3.40.50.12230">
    <property type="match status" value="1"/>
</dbReference>
<dbReference type="HAMAP" id="MF_00182">
    <property type="entry name" value="Formyl_trans"/>
    <property type="match status" value="1"/>
</dbReference>
<dbReference type="InterPro" id="IPR005794">
    <property type="entry name" value="Fmt"/>
</dbReference>
<dbReference type="InterPro" id="IPR005793">
    <property type="entry name" value="Formyl_trans_C"/>
</dbReference>
<dbReference type="InterPro" id="IPR002376">
    <property type="entry name" value="Formyl_transf_N"/>
</dbReference>
<dbReference type="InterPro" id="IPR036477">
    <property type="entry name" value="Formyl_transf_N_sf"/>
</dbReference>
<dbReference type="InterPro" id="IPR011034">
    <property type="entry name" value="Formyl_transferase-like_C_sf"/>
</dbReference>
<dbReference type="InterPro" id="IPR001555">
    <property type="entry name" value="GART_AS"/>
</dbReference>
<dbReference type="InterPro" id="IPR044135">
    <property type="entry name" value="Met-tRNA-FMT_C"/>
</dbReference>
<dbReference type="InterPro" id="IPR041711">
    <property type="entry name" value="Met-tRNA-FMT_N"/>
</dbReference>
<dbReference type="NCBIfam" id="TIGR00460">
    <property type="entry name" value="fmt"/>
    <property type="match status" value="1"/>
</dbReference>
<dbReference type="PANTHER" id="PTHR11138">
    <property type="entry name" value="METHIONYL-TRNA FORMYLTRANSFERASE"/>
    <property type="match status" value="1"/>
</dbReference>
<dbReference type="PANTHER" id="PTHR11138:SF5">
    <property type="entry name" value="METHIONYL-TRNA FORMYLTRANSFERASE, MITOCHONDRIAL"/>
    <property type="match status" value="1"/>
</dbReference>
<dbReference type="Pfam" id="PF02911">
    <property type="entry name" value="Formyl_trans_C"/>
    <property type="match status" value="1"/>
</dbReference>
<dbReference type="Pfam" id="PF00551">
    <property type="entry name" value="Formyl_trans_N"/>
    <property type="match status" value="1"/>
</dbReference>
<dbReference type="SUPFAM" id="SSF50486">
    <property type="entry name" value="FMT C-terminal domain-like"/>
    <property type="match status" value="1"/>
</dbReference>
<dbReference type="SUPFAM" id="SSF53328">
    <property type="entry name" value="Formyltransferase"/>
    <property type="match status" value="1"/>
</dbReference>
<dbReference type="PROSITE" id="PS00373">
    <property type="entry name" value="GART"/>
    <property type="match status" value="1"/>
</dbReference>
<proteinExistence type="inferred from homology"/>
<protein>
    <recommendedName>
        <fullName evidence="1">Methionyl-tRNA formyltransferase</fullName>
        <ecNumber evidence="1">2.1.2.9</ecNumber>
    </recommendedName>
</protein>
<keyword id="KW-0648">Protein biosynthesis</keyword>
<keyword id="KW-0808">Transferase</keyword>
<organism>
    <name type="scientific">Rhodopseudomonas palustris (strain BisB5)</name>
    <dbReference type="NCBI Taxonomy" id="316057"/>
    <lineage>
        <taxon>Bacteria</taxon>
        <taxon>Pseudomonadati</taxon>
        <taxon>Pseudomonadota</taxon>
        <taxon>Alphaproteobacteria</taxon>
        <taxon>Hyphomicrobiales</taxon>
        <taxon>Nitrobacteraceae</taxon>
        <taxon>Rhodopseudomonas</taxon>
    </lineage>
</organism>
<reference key="1">
    <citation type="submission" date="2006-03" db="EMBL/GenBank/DDBJ databases">
        <title>Complete sequence of Rhodopseudomonas palustris BisB5.</title>
        <authorList>
            <consortium name="US DOE Joint Genome Institute"/>
            <person name="Copeland A."/>
            <person name="Lucas S."/>
            <person name="Lapidus A."/>
            <person name="Barry K."/>
            <person name="Detter J.C."/>
            <person name="Glavina del Rio T."/>
            <person name="Hammon N."/>
            <person name="Israni S."/>
            <person name="Dalin E."/>
            <person name="Tice H."/>
            <person name="Pitluck S."/>
            <person name="Chain P."/>
            <person name="Malfatti S."/>
            <person name="Shin M."/>
            <person name="Vergez L."/>
            <person name="Schmutz J."/>
            <person name="Larimer F."/>
            <person name="Land M."/>
            <person name="Hauser L."/>
            <person name="Pelletier D.A."/>
            <person name="Kyrpides N."/>
            <person name="Lykidis A."/>
            <person name="Oda Y."/>
            <person name="Harwood C.S."/>
            <person name="Richardson P."/>
        </authorList>
    </citation>
    <scope>NUCLEOTIDE SEQUENCE [LARGE SCALE GENOMIC DNA]</scope>
    <source>
        <strain>BisB5</strain>
    </source>
</reference>
<gene>
    <name evidence="1" type="primary">fmt</name>
    <name type="ordered locus">RPD_0080</name>
</gene>
<accession>Q13F19</accession>
<feature type="chain" id="PRO_1000020143" description="Methionyl-tRNA formyltransferase">
    <location>
        <begin position="1"/>
        <end position="310"/>
    </location>
</feature>
<feature type="binding site" evidence="1">
    <location>
        <begin position="111"/>
        <end position="114"/>
    </location>
    <ligand>
        <name>(6S)-5,6,7,8-tetrahydrofolate</name>
        <dbReference type="ChEBI" id="CHEBI:57453"/>
    </ligand>
</feature>